<organism>
    <name type="scientific">Vigna unguiculata</name>
    <name type="common">Cowpea</name>
    <dbReference type="NCBI Taxonomy" id="3917"/>
    <lineage>
        <taxon>Eukaryota</taxon>
        <taxon>Viridiplantae</taxon>
        <taxon>Streptophyta</taxon>
        <taxon>Embryophyta</taxon>
        <taxon>Tracheophyta</taxon>
        <taxon>Spermatophyta</taxon>
        <taxon>Magnoliopsida</taxon>
        <taxon>eudicotyledons</taxon>
        <taxon>Gunneridae</taxon>
        <taxon>Pentapetalae</taxon>
        <taxon>rosids</taxon>
        <taxon>fabids</taxon>
        <taxon>Fabales</taxon>
        <taxon>Fabaceae</taxon>
        <taxon>Papilionoideae</taxon>
        <taxon>50 kb inversion clade</taxon>
        <taxon>NPAAA clade</taxon>
        <taxon>indigoferoid/millettioid clade</taxon>
        <taxon>Phaseoleae</taxon>
        <taxon>Vigna</taxon>
    </lineage>
</organism>
<sequence>KTCMTKKEGWGRCLIDTTCAHSCRKYGYMGGKCQGITRRCYCLLNC</sequence>
<protein>
    <recommendedName>
        <fullName>Defensin-like protein 2</fullName>
    </recommendedName>
    <alternativeName>
        <fullName>Cp-thionin II</fullName>
    </alternativeName>
    <alternativeName>
        <fullName>Cp-thionin-2</fullName>
    </alternativeName>
    <alternativeName>
        <fullName>Gamma-thionin II</fullName>
    </alternativeName>
</protein>
<accession>P84920</accession>
<dbReference type="SMR" id="P84920"/>
<dbReference type="GO" id="GO:0042742">
    <property type="term" value="P:defense response to bacterium"/>
    <property type="evidence" value="ECO:0007669"/>
    <property type="project" value="UniProtKB-KW"/>
</dbReference>
<dbReference type="GO" id="GO:0050832">
    <property type="term" value="P:defense response to fungus"/>
    <property type="evidence" value="ECO:0007669"/>
    <property type="project" value="UniProtKB-KW"/>
</dbReference>
<dbReference type="GO" id="GO:0031640">
    <property type="term" value="P:killing of cells of another organism"/>
    <property type="evidence" value="ECO:0007669"/>
    <property type="project" value="UniProtKB-KW"/>
</dbReference>
<dbReference type="Gene3D" id="3.30.30.10">
    <property type="entry name" value="Knottin, scorpion toxin-like"/>
    <property type="match status" value="1"/>
</dbReference>
<dbReference type="InterPro" id="IPR036574">
    <property type="entry name" value="Scorpion_toxin-like_sf"/>
</dbReference>
<dbReference type="Pfam" id="PF00304">
    <property type="entry name" value="Gamma-thionin"/>
    <property type="match status" value="1"/>
</dbReference>
<dbReference type="SUPFAM" id="SSF57095">
    <property type="entry name" value="Scorpion toxin-like"/>
    <property type="match status" value="1"/>
</dbReference>
<name>DEF2_VIGUN</name>
<evidence type="ECO:0000250" key="1">
    <source>
        <dbReference type="UniProtKB" id="P20158"/>
    </source>
</evidence>
<evidence type="ECO:0000269" key="2">
    <source>
    </source>
</evidence>
<evidence type="ECO:0000305" key="3"/>
<evidence type="ECO:0000305" key="4">
    <source>
    </source>
</evidence>
<keyword id="KW-0044">Antibiotic</keyword>
<keyword id="KW-0929">Antimicrobial</keyword>
<keyword id="KW-0903">Direct protein sequencing</keyword>
<keyword id="KW-1015">Disulfide bond</keyword>
<keyword id="KW-0295">Fungicide</keyword>
<keyword id="KW-0611">Plant defense</keyword>
<reference evidence="3" key="1">
    <citation type="journal article" date="2006" name="FEBS J.">
        <title>Identification of a cowpea gamma-thionin with bactericidal activity.</title>
        <authorList>
            <person name="Franco O.L."/>
            <person name="Murad A.M."/>
            <person name="Leite J.R."/>
            <person name="Mendes P.A.M."/>
            <person name="Prates M.V."/>
            <person name="Bloch C. Jr."/>
        </authorList>
    </citation>
    <scope>PROTEIN SEQUENCE</scope>
    <scope>FUNCTION</scope>
    <scope>SUBUNIT</scope>
    <scope>TISSUE SPECIFICITY</scope>
    <scope>DEVELOPMENTAL STAGE</scope>
    <scope>MASS SPECTROMETRY</scope>
    <source>
        <strain evidence="2">cv. Epace-10</strain>
        <tissue evidence="2">Seed</tissue>
    </source>
</reference>
<feature type="chain" id="PRO_0000248510" description="Defensin-like protein 2">
    <location>
        <begin position="1"/>
        <end position="46"/>
    </location>
</feature>
<feature type="disulfide bond" evidence="1">
    <location>
        <begin position="3"/>
        <end position="46"/>
    </location>
</feature>
<feature type="disulfide bond" evidence="1">
    <location>
        <begin position="13"/>
        <end position="33"/>
    </location>
</feature>
<feature type="disulfide bond" evidence="1">
    <location>
        <begin position="19"/>
        <end position="40"/>
    </location>
</feature>
<feature type="disulfide bond" evidence="1">
    <location>
        <begin position="23"/>
        <end position="42"/>
    </location>
</feature>
<proteinExistence type="evidence at protein level"/>
<comment type="function">
    <text evidence="2">Has antibacterial activity against the Gram-positive bacterium S.aureus and the Gram-negative bacteria E.coli and P.syringae. Does not have antibacterial activity against the phytopathogenic bacteria R.solanacearum, Rhataybacter sp and Erwinia sp. Does not inhibit trypsin, chymotrypsin or alpha-amylases.</text>
</comment>
<comment type="subunit">
    <text evidence="2">Monomer.</text>
</comment>
<comment type="tissue specificity">
    <text evidence="2">Present in seeds, cotyledons and leaves. Not found in roots or stems.</text>
</comment>
<comment type="developmental stage">
    <text evidence="2">Present in seeds and seedlings, levels decrease with seedling age. Light increases the rate of degradation. Present until 9 days in seedlings kept in the dark, not found after 6 days in seedlings kept in the light.</text>
</comment>
<comment type="mass spectrometry"/>
<comment type="similarity">
    <text evidence="3">Belongs to the DEFL family. Protease inhibitor I18 (RTI/MTI-2) subfamily.</text>
</comment>
<comment type="caution">
    <text evidence="4">Was initially thought to be a thionin.</text>
</comment>